<proteinExistence type="inferred from homology"/>
<gene>
    <name evidence="1" type="primary">petG</name>
    <name type="ordered locus">cce_3265</name>
</gene>
<accession>B1WY29</accession>
<evidence type="ECO:0000255" key="1">
    <source>
        <dbReference type="HAMAP-Rule" id="MF_00432"/>
    </source>
</evidence>
<evidence type="ECO:0000305" key="2"/>
<keyword id="KW-0249">Electron transport</keyword>
<keyword id="KW-0472">Membrane</keyword>
<keyword id="KW-0602">Photosynthesis</keyword>
<keyword id="KW-1185">Reference proteome</keyword>
<keyword id="KW-0793">Thylakoid</keyword>
<keyword id="KW-0812">Transmembrane</keyword>
<keyword id="KW-1133">Transmembrane helix</keyword>
<keyword id="KW-0813">Transport</keyword>
<feature type="chain" id="PRO_0000355362" description="Cytochrome b6-f complex subunit 5">
    <location>
        <begin position="1"/>
        <end position="38"/>
    </location>
</feature>
<feature type="transmembrane region" description="Helical" evidence="1">
    <location>
        <begin position="5"/>
        <end position="25"/>
    </location>
</feature>
<comment type="function">
    <text evidence="1">Component of the cytochrome b6-f complex, which mediates electron transfer between photosystem II (PSII) and photosystem I (PSI), cyclic electron flow around PSI, and state transitions. PetG is required for either the stability or assembly of the cytochrome b6-f complex.</text>
</comment>
<comment type="subunit">
    <text evidence="1">The 4 large subunits of the cytochrome b6-f complex are cytochrome b6, subunit IV (17 kDa polypeptide, PetD), cytochrome f and the Rieske protein, while the 4 small subunits are PetG, PetL, PetM and PetN. The complex functions as a dimer.</text>
</comment>
<comment type="subcellular location">
    <subcellularLocation>
        <location evidence="1">Cellular thylakoid membrane</location>
        <topology evidence="1">Single-pass membrane protein</topology>
    </subcellularLocation>
</comment>
<comment type="similarity">
    <text evidence="1">Belongs to the PetG family.</text>
</comment>
<comment type="sequence caution" evidence="2">
    <conflict type="erroneous initiation">
        <sequence resource="EMBL-CDS" id="ACB52613"/>
    </conflict>
</comment>
<reference key="1">
    <citation type="journal article" date="2008" name="Proc. Natl. Acad. Sci. U.S.A.">
        <title>The genome of Cyanothece 51142, a unicellular diazotrophic cyanobacterium important in the marine nitrogen cycle.</title>
        <authorList>
            <person name="Welsh E.A."/>
            <person name="Liberton M."/>
            <person name="Stoeckel J."/>
            <person name="Loh T."/>
            <person name="Elvitigala T."/>
            <person name="Wang C."/>
            <person name="Wollam A."/>
            <person name="Fulton R.S."/>
            <person name="Clifton S.W."/>
            <person name="Jacobs J.M."/>
            <person name="Aurora R."/>
            <person name="Ghosh B.K."/>
            <person name="Sherman L.A."/>
            <person name="Smith R.D."/>
            <person name="Wilson R.K."/>
            <person name="Pakrasi H.B."/>
        </authorList>
    </citation>
    <scope>NUCLEOTIDE SEQUENCE [LARGE SCALE GENOMIC DNA]</scope>
    <source>
        <strain>ATCC 51142 / BH68</strain>
    </source>
</reference>
<sequence length="38" mass="4169">MIEPLLLGIVLGLIPITLAGLFVAAYLQYKRGNQLNLE</sequence>
<dbReference type="EMBL" id="CP000806">
    <property type="protein sequence ID" value="ACB52613.1"/>
    <property type="status" value="ALT_INIT"/>
    <property type="molecule type" value="Genomic_DNA"/>
</dbReference>
<dbReference type="RefSeq" id="WP_009547598.1">
    <property type="nucleotide sequence ID" value="NC_010546.1"/>
</dbReference>
<dbReference type="SMR" id="B1WY29"/>
<dbReference type="STRING" id="43989.cce_3265"/>
<dbReference type="KEGG" id="cyt:cce_3265"/>
<dbReference type="eggNOG" id="ENOG5033BE9">
    <property type="taxonomic scope" value="Bacteria"/>
</dbReference>
<dbReference type="HOGENOM" id="CLU_216962_0_0_3"/>
<dbReference type="Proteomes" id="UP000001203">
    <property type="component" value="Chromosome circular"/>
</dbReference>
<dbReference type="GO" id="GO:0009512">
    <property type="term" value="C:cytochrome b6f complex"/>
    <property type="evidence" value="ECO:0007669"/>
    <property type="project" value="InterPro"/>
</dbReference>
<dbReference type="GO" id="GO:0031676">
    <property type="term" value="C:plasma membrane-derived thylakoid membrane"/>
    <property type="evidence" value="ECO:0007669"/>
    <property type="project" value="UniProtKB-SubCell"/>
</dbReference>
<dbReference type="GO" id="GO:0045158">
    <property type="term" value="F:electron transporter, transferring electrons within cytochrome b6/f complex of photosystem II activity"/>
    <property type="evidence" value="ECO:0007669"/>
    <property type="project" value="UniProtKB-UniRule"/>
</dbReference>
<dbReference type="GO" id="GO:0017004">
    <property type="term" value="P:cytochrome complex assembly"/>
    <property type="evidence" value="ECO:0007669"/>
    <property type="project" value="UniProtKB-UniRule"/>
</dbReference>
<dbReference type="GO" id="GO:0015979">
    <property type="term" value="P:photosynthesis"/>
    <property type="evidence" value="ECO:0007669"/>
    <property type="project" value="UniProtKB-KW"/>
</dbReference>
<dbReference type="HAMAP" id="MF_00432">
    <property type="entry name" value="Cytb6_f_PetG"/>
    <property type="match status" value="1"/>
</dbReference>
<dbReference type="InterPro" id="IPR003683">
    <property type="entry name" value="Cyt_6/f_cplx_su5"/>
</dbReference>
<dbReference type="InterPro" id="IPR036099">
    <property type="entry name" value="Cyt_6/f_cplx_su5_sf"/>
</dbReference>
<dbReference type="NCBIfam" id="NF001907">
    <property type="entry name" value="PRK00665.1"/>
    <property type="match status" value="1"/>
</dbReference>
<dbReference type="Pfam" id="PF02529">
    <property type="entry name" value="PetG"/>
    <property type="match status" value="1"/>
</dbReference>
<dbReference type="PIRSF" id="PIRSF000034">
    <property type="entry name" value="Cyt_b6-f_V"/>
    <property type="match status" value="1"/>
</dbReference>
<dbReference type="SUPFAM" id="SSF103446">
    <property type="entry name" value="PetG subunit of the cytochrome b6f complex"/>
    <property type="match status" value="1"/>
</dbReference>
<name>PETG_CROS5</name>
<organism>
    <name type="scientific">Crocosphaera subtropica (strain ATCC 51142 / BH68)</name>
    <name type="common">Cyanothece sp. (strain ATCC 51142)</name>
    <dbReference type="NCBI Taxonomy" id="43989"/>
    <lineage>
        <taxon>Bacteria</taxon>
        <taxon>Bacillati</taxon>
        <taxon>Cyanobacteriota</taxon>
        <taxon>Cyanophyceae</taxon>
        <taxon>Oscillatoriophycideae</taxon>
        <taxon>Chroococcales</taxon>
        <taxon>Aphanothecaceae</taxon>
        <taxon>Crocosphaera</taxon>
        <taxon>Crocosphaera subtropica</taxon>
    </lineage>
</organism>
<protein>
    <recommendedName>
        <fullName evidence="1">Cytochrome b6-f complex subunit 5</fullName>
    </recommendedName>
    <alternativeName>
        <fullName evidence="1">Cytochrome b6-f complex subunit PetG</fullName>
    </alternativeName>
    <alternativeName>
        <fullName evidence="1">Cytochrome b6-f complex subunit V</fullName>
    </alternativeName>
</protein>